<protein>
    <recommendedName>
        <fullName evidence="1">Capsid polyprotein VP86</fullName>
    </recommendedName>
    <component>
        <recommendedName>
            <fullName evidence="1">Core protein VP33</fullName>
        </recommendedName>
    </component>
    <component>
        <recommendedName>
            <fullName evidence="1">Spike protein VP38</fullName>
        </recommendedName>
    </component>
</protein>
<reference key="1">
    <citation type="journal article" date="2003" name="Virus Res.">
        <title>Complete genomic sequences of astroviruses from sheep and turkey: comparison with related viruses.</title>
        <authorList>
            <person name="Jonassen C.M."/>
            <person name="Jonassen T.O."/>
            <person name="Sveen T.M."/>
            <person name="Grinde B."/>
        </authorList>
    </citation>
    <scope>NUCLEOTIDE SEQUENCE [GENOMIC RNA]</scope>
</reference>
<keyword id="KW-0167">Capsid protein</keyword>
<keyword id="KW-1165">Clathrin-mediated endocytosis of virus by host</keyword>
<keyword id="KW-1142">T=3 icosahedral capsid protein</keyword>
<keyword id="KW-1162">Viral penetration into host cytoplasm</keyword>
<keyword id="KW-0946">Virion</keyword>
<keyword id="KW-1164">Virus endocytosis by host</keyword>
<keyword id="KW-1160">Virus entry into host cell</keyword>
<sequence length="762" mass="82366">MAEKPQQKAVASAAKQLAKEVVKLDKITKSNGKQHPQKNVPARKWRPRQAKPNNRRVTHKIKRELHKQGLEGPASRFRVTVSATIGKVGPNKEQGPELQIATFLHPSLVKEPNDGSNFGPLQAAAAQWGLWRISDLEVRFTPLVGSSAVTGSVTRASLNLTQSPGATSWGGLGARKHLDVPTGVSKVWKLRRGDLTGPRQTWWVTDTNEEGGQSCGPMLEVHGLGKTTSTYKDSDWTGDLFIVELHGTWEFSNYNAKPALGMLERVTDQTNVELGVDTEGQITMTIPENSPMARHMGERFERASASNASSVGETIWQIVDEGAGLASSVAPAPFGWLIKGGWWFVKKILGRAANAGSQYLVYASLADAQNGKPAMSTSRGYVREVKQTILSSTQLNAPNTGPGASQPALAAYEMFPYFPHGEPAVGQPFYLMSTVSTGVYREAMPVWVKYNYPGAPSNQAPFEVTIGQTTYQAQTYFKLTEPVAYGADIPEVTSEVKPALNGWYTLDTLPAIGTFQAIFTLPGTKSKYGDVVAASHFSITPQLMLVAYLVRVTTALPNALRGSPWSDNADNSILYYTPLVNAYAAATSDANPIQFTPNRACVSECRSHCGHPTIVAADVGEYILALVWCRGNGFSAGVINSYGALADTSFNLDSLRADSNGVMTLLNRAVPYSSLCALRMTRGVPPTSDDELVARILGQLQTRLKFAAGSGSSSEDDLSDDDDFECLRSTPLQQIYEGVRGLRGHAEAVAVVKSLQSRGHAE</sequence>
<feature type="chain" id="PRO_0000320240" description="Capsid polyprotein VP86">
    <location>
        <begin position="1"/>
        <end position="762"/>
    </location>
</feature>
<feature type="chain" id="PRO_0000460933" description="Core protein VP33">
    <location>
        <begin position="1"/>
        <end position="305"/>
    </location>
</feature>
<feature type="chain" id="PRO_0000460934" description="Spike protein VP38" evidence="1">
    <location>
        <begin position="355"/>
        <end position="696"/>
    </location>
</feature>
<feature type="region of interest" description="Disordered" evidence="4">
    <location>
        <begin position="25"/>
        <end position="56"/>
    </location>
</feature>
<feature type="region of interest" description="Inner core" evidence="3">
    <location>
        <begin position="67"/>
        <end position="259"/>
    </location>
</feature>
<feature type="compositionally biased region" description="Basic residues" evidence="4">
    <location>
        <begin position="41"/>
        <end position="56"/>
    </location>
</feature>
<feature type="site" description="Cleavage" evidence="1">
    <location>
        <begin position="305"/>
        <end position="306"/>
    </location>
</feature>
<feature type="site" description="Cleavage" evidence="1">
    <location>
        <begin position="354"/>
        <end position="355"/>
    </location>
</feature>
<accession>Q9JH65</accession>
<evidence type="ECO:0000250" key="1">
    <source>
        <dbReference type="UniProtKB" id="C7BG48"/>
    </source>
</evidence>
<evidence type="ECO:0000250" key="2">
    <source>
        <dbReference type="UniProtKB" id="O12792"/>
    </source>
</evidence>
<evidence type="ECO:0000250" key="3">
    <source>
        <dbReference type="UniProtKB" id="Q9IFX1"/>
    </source>
</evidence>
<evidence type="ECO:0000256" key="4">
    <source>
        <dbReference type="SAM" id="MobiDB-lite"/>
    </source>
</evidence>
<evidence type="ECO:0000305" key="5"/>
<name>CAPSD_OASV1</name>
<comment type="function">
    <molecule>Capsid polyprotein VP86</molecule>
    <text evidence="3">The capsid polyprotein VP90 self-assembles and undergoes a proteolytic cleavage by host caspases to yield the immature VP70 virion.</text>
</comment>
<comment type="function">
    <molecule>Core protein VP33</molecule>
    <text evidence="2">Self-assembles to form an icosahedral capsid with a T=3 symmetry, about 43 nm in diameter.</text>
</comment>
<comment type="function">
    <molecule>Spike protein VP38</molecule>
    <text evidence="1 2">Forms the spikes at the surface of the virion (By similarity). Plays a role in the attachment to target host cell (By similarity).</text>
</comment>
<comment type="subunit">
    <molecule>Spike protein VP38</molecule>
    <text evidence="1">Homodimer.</text>
</comment>
<comment type="subcellular location">
    <molecule>Capsid polyprotein VP86</molecule>
    <subcellularLocation>
        <location evidence="3">Virion</location>
    </subcellularLocation>
    <text evidence="3">Immature capsid.</text>
</comment>
<comment type="subcellular location">
    <molecule>Core protein VP33</molecule>
    <subcellularLocation>
        <location evidence="1">Virion</location>
    </subcellularLocation>
    <text evidence="2">Capsid.</text>
</comment>
<comment type="subcellular location">
    <molecule>Spike protein VP38</molecule>
    <subcellularLocation>
        <location evidence="1">Virion</location>
    </subcellularLocation>
    <text evidence="2">Capsid.</text>
</comment>
<comment type="domain">
    <molecule>Spike protein VP38</molecule>
    <text evidence="3">Contains the core attachment region and the P2 globular region.</text>
</comment>
<comment type="domain">
    <molecule>Capsid polyprotein VP86</molecule>
    <text evidence="1">Contains a lipid disrupting region that is exposed after trypsin treatment.</text>
</comment>
<comment type="domain">
    <molecule>Capsid polyprotein VP86</molecule>
    <text evidence="1">The highly basic N-terminus region binds to the viral RNA genome.</text>
</comment>
<comment type="PTM">
    <molecule>Capsid polyprotein VP86</molecule>
    <text evidence="1">Specific enzymatic cleavages by the host yield mature proteins. VP86 is processed into VP33 and VP38. Host caspases are not involved in processing capsid precursor.</text>
</comment>
<comment type="similarity">
    <text evidence="5">Belongs to the astroviridae capsid polyprotein family.</text>
</comment>
<gene>
    <name type="ORF">ORF2</name>
</gene>
<proteinExistence type="inferred from homology"/>
<organismHost>
    <name type="scientific">Ovis aries</name>
    <name type="common">Sheep</name>
    <dbReference type="NCBI Taxonomy" id="9940"/>
</organismHost>
<dbReference type="EMBL" id="Y15937">
    <property type="protein sequence ID" value="CAB95004.1"/>
    <property type="molecule type" value="Genomic_RNA"/>
</dbReference>
<dbReference type="SMR" id="Q9JH65"/>
<dbReference type="KEGG" id="vg:1449588"/>
<dbReference type="OrthoDB" id="2793at10239"/>
<dbReference type="Proteomes" id="UP000007786">
    <property type="component" value="Genome"/>
</dbReference>
<dbReference type="GO" id="GO:0039617">
    <property type="term" value="C:T=3 icosahedral viral capsid"/>
    <property type="evidence" value="ECO:0000250"/>
    <property type="project" value="UniProtKB"/>
</dbReference>
<dbReference type="GO" id="GO:0075512">
    <property type="term" value="P:clathrin-dependent endocytosis of virus by host cell"/>
    <property type="evidence" value="ECO:0000250"/>
    <property type="project" value="UniProtKB"/>
</dbReference>
<dbReference type="Gene3D" id="2.60.120.20">
    <property type="match status" value="1"/>
</dbReference>
<dbReference type="InterPro" id="IPR004337">
    <property type="entry name" value="Astro_capsid_N"/>
</dbReference>
<dbReference type="InterPro" id="IPR029053">
    <property type="entry name" value="Viral_coat"/>
</dbReference>
<dbReference type="Pfam" id="PF03115">
    <property type="entry name" value="Astro_capsid_N"/>
    <property type="match status" value="1"/>
</dbReference>
<organism>
    <name type="scientific">Ovine astrovirus 1</name>
    <name type="common">OAstV-1</name>
    <dbReference type="NCBI Taxonomy" id="1239577"/>
    <lineage>
        <taxon>Viruses</taxon>
        <taxon>Riboviria</taxon>
        <taxon>Orthornavirae</taxon>
        <taxon>Pisuviricota</taxon>
        <taxon>Stelpaviricetes</taxon>
        <taxon>Stellavirales</taxon>
        <taxon>Astroviridae</taxon>
        <taxon>Mamastrovirus</taxon>
    </lineage>
</organism>